<name>IGHG2_CAVPO</name>
<keyword id="KW-0903">Direct protein sequencing</keyword>
<keyword id="KW-1015">Disulfide bond</keyword>
<keyword id="KW-0325">Glycoprotein</keyword>
<keyword id="KW-0393">Immunoglobulin domain</keyword>
<keyword id="KW-1185">Reference proteome</keyword>
<keyword id="KW-0964">Secreted</keyword>
<sequence length="329" mass="36074">SARTTAPSVFPLAASCVDTSGSMMTLGCLVKGYFPEPVTVKWNSGALTSGVHTFPAVLQSGLYSLTSMVTVPSSQKATCNVAHPASSTKVDKTVEPIRTPZPBPCTCPKCPPPENLGGPSVFIFPPKPKDTLMISLTPRVTCVVVDVSQDEPEVQFTWFVDNKPVGNAETKPRVEQYNTTFRVESVLPIQHQDWLRGKEFKCKVYNKALPAPIEKTISKTKGAPRMPDVYTLPPSRDELSKSKVSVTCLIINFFPADIHVEWASNRVPVSEKEYKNTPPIEDADGSYFLYSKLTVDKSAWDQGTVYTCSVMHEALHNHVTQKAISRSPG</sequence>
<reference key="1">
    <citation type="submission" date="1975-04" db="PIR data bank">
        <authorList>
            <person name="Trischmann T.M."/>
        </authorList>
    </citation>
    <scope>PROTEIN SEQUENCE OF 1-3</scope>
</reference>
<reference key="2">
    <citation type="journal article" date="1971" name="Biochemistry">
        <title>Structure of heavy chain from strain 13 guinea pig immunoglobulin-G(2). 3. Amino acid sequence of the region around the half-cystine joining heavy and light chains.</title>
        <authorList>
            <person name="Birshtein B.K."/>
            <person name="Hussain Q.Z."/>
            <person name="Cebra J.J."/>
        </authorList>
    </citation>
    <scope>PROTEIN SEQUENCE OF 4-68</scope>
</reference>
<reference key="3">
    <citation type="journal article" date="1971" name="Biochemistry">
        <title>Structure of heavy chain from strain 13 guinea pig immunoglobulin-G(2). II. Amino acid sequence of the carboxyl-terminal and hinge region cyanogen bromide fragments.</title>
        <authorList>
            <person name="Turner K.J."/>
            <person name="Cebra J.J."/>
        </authorList>
    </citation>
    <scope>PROTEIN SEQUENCE OF 69-133 AND 312-329</scope>
</reference>
<reference key="4">
    <citation type="journal article" date="1974" name="Biochemistry">
        <title>Primary structure of the CH2 homology region from guinea pig IgG2 antibodies.</title>
        <authorList>
            <person name="Tracey D.E."/>
            <person name="Cebra J.J."/>
        </authorList>
    </citation>
    <scope>PROTEIN SEQUENCE OF 134-226</scope>
</reference>
<reference key="5">
    <citation type="journal article" date="1974" name="Biochemistry">
        <title>Primary structure of the CH3 homology region from guinea pig IgG2 antibodies.</title>
        <authorList>
            <person name="Trischmann T.M."/>
            <person name="Cebra J.J."/>
        </authorList>
    </citation>
    <scope>PROTEIN SEQUENCE OF 227-311</scope>
</reference>
<reference key="6">
    <citation type="journal article" date="1971" name="Biochemistry">
        <title>Interchain disulfide bridges of guinea pig gamma-2-immunoglobulin.</title>
        <authorList>
            <person name="Oliveira B."/>
            <person name="Lamm M.E."/>
        </authorList>
    </citation>
    <scope>DISULFIDE BONDS</scope>
</reference>
<comment type="subcellular location">
    <subcellularLocation>
        <location>Secreted</location>
    </subcellularLocation>
</comment>
<comment type="miscellaneous">
    <text>This chain was isolated from pooled serum of strain 13 inbred guinea pigs.</text>
</comment>
<protein>
    <recommendedName>
        <fullName>Ig gamma-2 chain C region</fullName>
    </recommendedName>
</protein>
<dbReference type="PIR" id="A94553">
    <property type="entry name" value="G2GP"/>
</dbReference>
<dbReference type="FunCoup" id="P01862">
    <property type="interactions" value="65"/>
</dbReference>
<dbReference type="iPTMnet" id="P01862"/>
<dbReference type="ABCD" id="P01862">
    <property type="antibodies" value="3 sequenced antibodies"/>
</dbReference>
<dbReference type="InParanoid" id="P01862"/>
<dbReference type="Proteomes" id="UP000005447">
    <property type="component" value="Unassembled WGS sequence"/>
</dbReference>
<dbReference type="GO" id="GO:0005576">
    <property type="term" value="C:extracellular region"/>
    <property type="evidence" value="ECO:0007669"/>
    <property type="project" value="UniProtKB-SubCell"/>
</dbReference>
<dbReference type="CDD" id="cd21817">
    <property type="entry name" value="IgC1_CH1_IgEG"/>
    <property type="match status" value="1"/>
</dbReference>
<dbReference type="CDD" id="cd05768">
    <property type="entry name" value="IgC1_CH3_IgAGD_CH4_IgAEM"/>
    <property type="match status" value="1"/>
</dbReference>
<dbReference type="FunFam" id="2.60.40.10:FF:000463">
    <property type="entry name" value="Immunoglobulin heavy constant gamma 1"/>
    <property type="match status" value="1"/>
</dbReference>
<dbReference type="FunFam" id="2.60.40.10:FF:001129">
    <property type="entry name" value="Immunoglobulin heavy constant gamma 1"/>
    <property type="match status" value="1"/>
</dbReference>
<dbReference type="FunFam" id="2.60.40.10:FF:001540">
    <property type="entry name" value="Immunoglobulin heavy constant gamma 1"/>
    <property type="match status" value="1"/>
</dbReference>
<dbReference type="Gene3D" id="2.60.40.10">
    <property type="entry name" value="Immunoglobulins"/>
    <property type="match status" value="3"/>
</dbReference>
<dbReference type="InterPro" id="IPR007110">
    <property type="entry name" value="Ig-like_dom"/>
</dbReference>
<dbReference type="InterPro" id="IPR036179">
    <property type="entry name" value="Ig-like_dom_sf"/>
</dbReference>
<dbReference type="InterPro" id="IPR013783">
    <property type="entry name" value="Ig-like_fold"/>
</dbReference>
<dbReference type="InterPro" id="IPR003006">
    <property type="entry name" value="Ig/MHC_CS"/>
</dbReference>
<dbReference type="InterPro" id="IPR003597">
    <property type="entry name" value="Ig_C1-set"/>
</dbReference>
<dbReference type="InterPro" id="IPR050380">
    <property type="entry name" value="Immune_Resp_Modulators"/>
</dbReference>
<dbReference type="PANTHER" id="PTHR23411">
    <property type="entry name" value="TAPASIN"/>
    <property type="match status" value="1"/>
</dbReference>
<dbReference type="Pfam" id="PF07654">
    <property type="entry name" value="C1-set"/>
    <property type="match status" value="3"/>
</dbReference>
<dbReference type="SMART" id="SM00407">
    <property type="entry name" value="IGc1"/>
    <property type="match status" value="3"/>
</dbReference>
<dbReference type="SUPFAM" id="SSF48726">
    <property type="entry name" value="Immunoglobulin"/>
    <property type="match status" value="3"/>
</dbReference>
<dbReference type="PROSITE" id="PS50835">
    <property type="entry name" value="IG_LIKE"/>
    <property type="match status" value="3"/>
</dbReference>
<dbReference type="PROSITE" id="PS00290">
    <property type="entry name" value="IG_MHC"/>
    <property type="match status" value="1"/>
</dbReference>
<organism>
    <name type="scientific">Cavia porcellus</name>
    <name type="common">Guinea pig</name>
    <dbReference type="NCBI Taxonomy" id="10141"/>
    <lineage>
        <taxon>Eukaryota</taxon>
        <taxon>Metazoa</taxon>
        <taxon>Chordata</taxon>
        <taxon>Craniata</taxon>
        <taxon>Vertebrata</taxon>
        <taxon>Euteleostomi</taxon>
        <taxon>Mammalia</taxon>
        <taxon>Eutheria</taxon>
        <taxon>Euarchontoglires</taxon>
        <taxon>Glires</taxon>
        <taxon>Rodentia</taxon>
        <taxon>Hystricomorpha</taxon>
        <taxon>Caviidae</taxon>
        <taxon>Cavia</taxon>
    </lineage>
</organism>
<feature type="chain" id="PRO_0000153577" description="Ig gamma-2 chain C region">
    <location>
        <begin position="1" status="less than"/>
        <end position="329"/>
    </location>
</feature>
<feature type="glycosylation site" description="N-linked (GlcNAc...) asparagine" evidence="2">
    <location>
        <position position="178"/>
    </location>
</feature>
<feature type="disulfide bond" description="Interchain (with a light chain)" evidence="1 3">
    <location>
        <position position="16"/>
    </location>
</feature>
<feature type="disulfide bond" evidence="1 3">
    <location>
        <begin position="28"/>
        <end position="79"/>
    </location>
</feature>
<feature type="disulfide bond" description="Interchain (with a heavy chain)" evidence="1 3">
    <location>
        <position position="105"/>
    </location>
</feature>
<feature type="disulfide bond" description="Interchain (with a heavy chain)" evidence="1 3">
    <location>
        <position position="107"/>
    </location>
</feature>
<feature type="disulfide bond" description="Interchain (with a heavy chain)" evidence="1 3">
    <location>
        <position position="110"/>
    </location>
</feature>
<feature type="disulfide bond" evidence="1 3">
    <location>
        <begin position="142"/>
        <end position="202"/>
    </location>
</feature>
<feature type="disulfide bond" evidence="1 3">
    <location>
        <begin position="248"/>
        <end position="308"/>
    </location>
</feature>
<feature type="non-terminal residue">
    <location>
        <position position="1"/>
    </location>
</feature>
<evidence type="ECO:0000255" key="1">
    <source>
        <dbReference type="PROSITE-ProRule" id="PRU00114"/>
    </source>
</evidence>
<evidence type="ECO:0000269" key="2">
    <source>
    </source>
</evidence>
<evidence type="ECO:0000269" key="3">
    <source>
    </source>
</evidence>
<accession>P01862</accession>
<proteinExistence type="evidence at protein level"/>